<accession>Q5T6S3</accession>
<accession>Q32NF2</accession>
<accession>Q5T6S4</accession>
<accession>Q6N038</accession>
<accession>Q8TBL6</accession>
<accession>Q9UFS9</accession>
<name>PHF19_HUMAN</name>
<feature type="chain" id="PRO_0000318570" description="PHD finger protein 19">
    <location>
        <begin position="1"/>
        <end position="580"/>
    </location>
</feature>
<feature type="domain" description="Tudor">
    <location>
        <begin position="40"/>
        <end position="93"/>
    </location>
</feature>
<feature type="zinc finger region" description="PHD-type 1">
    <location>
        <begin position="96"/>
        <end position="151"/>
    </location>
</feature>
<feature type="zinc finger region" description="PHD-type 2">
    <location>
        <begin position="195"/>
        <end position="249"/>
    </location>
</feature>
<feature type="region of interest" description="Histone H3K36me3 binding">
    <location>
        <begin position="74"/>
        <end position="80"/>
    </location>
</feature>
<feature type="region of interest" description="Disordered" evidence="1">
    <location>
        <begin position="347"/>
        <end position="390"/>
    </location>
</feature>
<feature type="region of interest" description="Disordered" evidence="1">
    <location>
        <begin position="496"/>
        <end position="521"/>
    </location>
</feature>
<feature type="region of interest" description="Interaction with SUZ12" evidence="9">
    <location>
        <begin position="531"/>
        <end position="580"/>
    </location>
</feature>
<feature type="region of interest" description="Important for PRC2 dimer stability" evidence="10">
    <location>
        <begin position="531"/>
        <end position="544"/>
    </location>
</feature>
<feature type="compositionally biased region" description="Low complexity" evidence="1">
    <location>
        <begin position="351"/>
        <end position="360"/>
    </location>
</feature>
<feature type="compositionally biased region" description="Basic and acidic residues" evidence="1">
    <location>
        <begin position="511"/>
        <end position="521"/>
    </location>
</feature>
<feature type="site" description="Histone H3K36me3 binding">
    <location>
        <position position="47"/>
    </location>
</feature>
<feature type="site" description="Histone H3K36me3 binding">
    <location>
        <position position="55"/>
    </location>
</feature>
<feature type="modified residue" description="Phosphoserine" evidence="16">
    <location>
        <position position="13"/>
    </location>
</feature>
<feature type="modified residue" description="Phosphoserine" evidence="16">
    <location>
        <position position="187"/>
    </location>
</feature>
<feature type="modified residue" description="Phosphoserine" evidence="16">
    <location>
        <position position="365"/>
    </location>
</feature>
<feature type="modified residue" description="Phosphoserine" evidence="16">
    <location>
        <position position="366"/>
    </location>
</feature>
<feature type="splice variant" id="VSP_031222" description="In isoform 3." evidence="11">
    <original>GYHQQCHIP</original>
    <variation>VPHPHSGQC</variation>
    <location>
        <begin position="122"/>
        <end position="130"/>
    </location>
</feature>
<feature type="splice variant" id="VSP_031223" description="In isoform 3." evidence="11">
    <location>
        <begin position="131"/>
        <end position="580"/>
    </location>
</feature>
<feature type="splice variant" id="VSP_031224" description="In isoform 2." evidence="11">
    <original>RKGGALKKGAIARTLQAVKMVLSYQPEELEWDSPHRTNQQQCYCYCGGPGEWY</original>
    <variation>RVSLPSSPVPASPASSSGADQRLPSQSLSSKQKGHTWALETDSASATVLGQDL</variation>
    <location>
        <begin position="155"/>
        <end position="207"/>
    </location>
</feature>
<feature type="splice variant" id="VSP_031225" description="In isoform 2." evidence="11">
    <location>
        <begin position="208"/>
        <end position="580"/>
    </location>
</feature>
<feature type="mutagenesis site" description="In muthPhf19; abolishes histone H3K36me3-binding and impaired activity of the PRC2 complex and subsequent H3K27me3 methylation." evidence="5 6">
    <original>W</original>
    <variation>A</variation>
    <location>
        <position position="50"/>
    </location>
</feature>
<feature type="mutagenesis site" description="Abolishes histone H3K36me3-binding and recruitment of the PRC2 complex and RIOX1; when associated with A-56." evidence="5 6">
    <original>W</original>
    <variation>C</variation>
    <location>
        <position position="50"/>
    </location>
</feature>
<feature type="mutagenesis site" description="Abolishes histone H3K36me3-binding. Abolishes histone H3K36me3-binding and recruitment of the PRC2 complex and RIOX1; when associated with C-50." evidence="6 8">
    <original>Y</original>
    <variation>A</variation>
    <location>
        <position position="56"/>
    </location>
</feature>
<feature type="mutagenesis site" description="Impairs chromatin binding as part of the PRC2 complex." evidence="10">
    <original>KK</original>
    <variation>AA</variation>
    <location>
        <begin position="331"/>
        <end position="332"/>
    </location>
</feature>
<feature type="sequence conflict" description="In Ref. 1; CAE45832." evidence="12" ref="1">
    <original>E</original>
    <variation>G</variation>
    <location>
        <position position="181"/>
    </location>
</feature>
<feature type="strand" evidence="18">
    <location>
        <begin position="45"/>
        <end position="49"/>
    </location>
</feature>
<feature type="strand" evidence="18">
    <location>
        <begin position="55"/>
        <end position="64"/>
    </location>
</feature>
<feature type="turn" evidence="18">
    <location>
        <begin position="65"/>
        <end position="68"/>
    </location>
</feature>
<feature type="strand" evidence="18">
    <location>
        <begin position="69"/>
        <end position="73"/>
    </location>
</feature>
<feature type="strand" evidence="18">
    <location>
        <begin position="79"/>
        <end position="83"/>
    </location>
</feature>
<feature type="helix" evidence="18">
    <location>
        <begin position="84"/>
        <end position="86"/>
    </location>
</feature>
<feature type="strand" evidence="18">
    <location>
        <begin position="87"/>
        <end position="89"/>
    </location>
</feature>
<feature type="helix" evidence="17">
    <location>
        <begin position="531"/>
        <end position="543"/>
    </location>
</feature>
<feature type="helix" evidence="17">
    <location>
        <begin position="545"/>
        <end position="551"/>
    </location>
</feature>
<feature type="strand" evidence="17">
    <location>
        <begin position="555"/>
        <end position="563"/>
    </location>
</feature>
<feature type="turn" evidence="17">
    <location>
        <begin position="564"/>
        <end position="566"/>
    </location>
</feature>
<feature type="strand" evidence="17">
    <location>
        <begin position="567"/>
        <end position="574"/>
    </location>
</feature>
<feature type="modified residue" description="Phosphoserine" evidence="15">
    <location sequence="Q5T6S3-2">
        <position position="166"/>
    </location>
</feature>
<protein>
    <recommendedName>
        <fullName>PHD finger protein 19</fullName>
    </recommendedName>
    <alternativeName>
        <fullName>Polycomb-like protein 3</fullName>
        <shortName>hPCL3</shortName>
    </alternativeName>
</protein>
<sequence length="580" mass="65591">MENRALDPGTRDSYGATSHLPNKGALAKVKNNFKDLMSKLTEGQYVLCRWTDGLYYLGKIKRVSSSKQSCLVTFEDNSKYWVLWKDIQHAGVPGEEPKCNICLGKTSGPLNEILICGKCGLGYHQQCHIPIAGSADQPLLTPWFCRRCIFALAVRKGGALKKGAIARTLQAVKMVLSYQPEELEWDSPHRTNQQQCYCYCGGPGEWYLRMLQCYRCRQWFHEACTQCLNEPMMFGDRFYLFFCSVCNQGPEYIERLPLRWVDVVHLALYNLGVQSKKKYFDFEEILAFVNHHWELLQLGKLTSTPVTDRGPHLLNALNSYKSRFLCGKEIKKKKCIFRLRIRVPPNPPGKLLPDKGLLPNENSASSELRKRGKSKPGLLPHEFQQQKRRVYRRKRSKFLLEDAIPSSDFTSAWSTNHHLASIFDFTLDEIQSLKSASSGQTFFSDVDSTDAASTSGSASTSLSYDSRWTVGSRKRKLAAKAYMPLRAKRWAAELDGRCPSDSSAEGASVPERPDEGIDSHTFESISEDDSSLSHLKSSITNYFGAAGRLACGEKYQVLARRVTPEGKVQYLVEWEGTTPY</sequence>
<organism>
    <name type="scientific">Homo sapiens</name>
    <name type="common">Human</name>
    <dbReference type="NCBI Taxonomy" id="9606"/>
    <lineage>
        <taxon>Eukaryota</taxon>
        <taxon>Metazoa</taxon>
        <taxon>Chordata</taxon>
        <taxon>Craniata</taxon>
        <taxon>Vertebrata</taxon>
        <taxon>Euteleostomi</taxon>
        <taxon>Mammalia</taxon>
        <taxon>Eutheria</taxon>
        <taxon>Euarchontoglires</taxon>
        <taxon>Primates</taxon>
        <taxon>Haplorrhini</taxon>
        <taxon>Catarrhini</taxon>
        <taxon>Hominidae</taxon>
        <taxon>Homo</taxon>
    </lineage>
</organism>
<proteinExistence type="evidence at protein level"/>
<keyword id="KW-0002">3D-structure</keyword>
<keyword id="KW-0025">Alternative splicing</keyword>
<keyword id="KW-0156">Chromatin regulator</keyword>
<keyword id="KW-0479">Metal-binding</keyword>
<keyword id="KW-0539">Nucleus</keyword>
<keyword id="KW-0597">Phosphoprotein</keyword>
<keyword id="KW-1267">Proteomics identification</keyword>
<keyword id="KW-1185">Reference proteome</keyword>
<keyword id="KW-0677">Repeat</keyword>
<keyword id="KW-0678">Repressor</keyword>
<keyword id="KW-0804">Transcription</keyword>
<keyword id="KW-0805">Transcription regulation</keyword>
<keyword id="KW-0862">Zinc</keyword>
<keyword id="KW-0863">Zinc-finger</keyword>
<reference key="1">
    <citation type="journal article" date="2007" name="BMC Genomics">
        <title>The full-ORF clone resource of the German cDNA consortium.</title>
        <authorList>
            <person name="Bechtel S."/>
            <person name="Rosenfelder H."/>
            <person name="Duda A."/>
            <person name="Schmidt C.P."/>
            <person name="Ernst U."/>
            <person name="Wellenreuther R."/>
            <person name="Mehrle A."/>
            <person name="Schuster C."/>
            <person name="Bahr A."/>
            <person name="Bloecker H."/>
            <person name="Heubner D."/>
            <person name="Hoerlein A."/>
            <person name="Michel G."/>
            <person name="Wedler H."/>
            <person name="Koehrer K."/>
            <person name="Ottenwaelder B."/>
            <person name="Poustka A."/>
            <person name="Wiemann S."/>
            <person name="Schupp I."/>
        </authorList>
    </citation>
    <scope>NUCLEOTIDE SEQUENCE [LARGE SCALE MRNA] (ISOFORM 1)</scope>
    <source>
        <tissue>Esophageal carcinoma</tissue>
        <tissue>Mammary cancer</tissue>
    </source>
</reference>
<reference key="2">
    <citation type="journal article" date="2004" name="Nature">
        <title>DNA sequence and analysis of human chromosome 9.</title>
        <authorList>
            <person name="Humphray S.J."/>
            <person name="Oliver K."/>
            <person name="Hunt A.R."/>
            <person name="Plumb R.W."/>
            <person name="Loveland J.E."/>
            <person name="Howe K.L."/>
            <person name="Andrews T.D."/>
            <person name="Searle S."/>
            <person name="Hunt S.E."/>
            <person name="Scott C.E."/>
            <person name="Jones M.C."/>
            <person name="Ainscough R."/>
            <person name="Almeida J.P."/>
            <person name="Ambrose K.D."/>
            <person name="Ashwell R.I.S."/>
            <person name="Babbage A.K."/>
            <person name="Babbage S."/>
            <person name="Bagguley C.L."/>
            <person name="Bailey J."/>
            <person name="Banerjee R."/>
            <person name="Barker D.J."/>
            <person name="Barlow K.F."/>
            <person name="Bates K."/>
            <person name="Beasley H."/>
            <person name="Beasley O."/>
            <person name="Bird C.P."/>
            <person name="Bray-Allen S."/>
            <person name="Brown A.J."/>
            <person name="Brown J.Y."/>
            <person name="Burford D."/>
            <person name="Burrill W."/>
            <person name="Burton J."/>
            <person name="Carder C."/>
            <person name="Carter N.P."/>
            <person name="Chapman J.C."/>
            <person name="Chen Y."/>
            <person name="Clarke G."/>
            <person name="Clark S.Y."/>
            <person name="Clee C.M."/>
            <person name="Clegg S."/>
            <person name="Collier R.E."/>
            <person name="Corby N."/>
            <person name="Crosier M."/>
            <person name="Cummings A.T."/>
            <person name="Davies J."/>
            <person name="Dhami P."/>
            <person name="Dunn M."/>
            <person name="Dutta I."/>
            <person name="Dyer L.W."/>
            <person name="Earthrowl M.E."/>
            <person name="Faulkner L."/>
            <person name="Fleming C.J."/>
            <person name="Frankish A."/>
            <person name="Frankland J.A."/>
            <person name="French L."/>
            <person name="Fricker D.G."/>
            <person name="Garner P."/>
            <person name="Garnett J."/>
            <person name="Ghori J."/>
            <person name="Gilbert J.G.R."/>
            <person name="Glison C."/>
            <person name="Grafham D.V."/>
            <person name="Gribble S."/>
            <person name="Griffiths C."/>
            <person name="Griffiths-Jones S."/>
            <person name="Grocock R."/>
            <person name="Guy J."/>
            <person name="Hall R.E."/>
            <person name="Hammond S."/>
            <person name="Harley J.L."/>
            <person name="Harrison E.S.I."/>
            <person name="Hart E.A."/>
            <person name="Heath P.D."/>
            <person name="Henderson C.D."/>
            <person name="Hopkins B.L."/>
            <person name="Howard P.J."/>
            <person name="Howden P.J."/>
            <person name="Huckle E."/>
            <person name="Johnson C."/>
            <person name="Johnson D."/>
            <person name="Joy A.A."/>
            <person name="Kay M."/>
            <person name="Keenan S."/>
            <person name="Kershaw J.K."/>
            <person name="Kimberley A.M."/>
            <person name="King A."/>
            <person name="Knights A."/>
            <person name="Laird G.K."/>
            <person name="Langford C."/>
            <person name="Lawlor S."/>
            <person name="Leongamornlert D.A."/>
            <person name="Leversha M."/>
            <person name="Lloyd C."/>
            <person name="Lloyd D.M."/>
            <person name="Lovell J."/>
            <person name="Martin S."/>
            <person name="Mashreghi-Mohammadi M."/>
            <person name="Matthews L."/>
            <person name="McLaren S."/>
            <person name="McLay K.E."/>
            <person name="McMurray A."/>
            <person name="Milne S."/>
            <person name="Nickerson T."/>
            <person name="Nisbett J."/>
            <person name="Nordsiek G."/>
            <person name="Pearce A.V."/>
            <person name="Peck A.I."/>
            <person name="Porter K.M."/>
            <person name="Pandian R."/>
            <person name="Pelan S."/>
            <person name="Phillimore B."/>
            <person name="Povey S."/>
            <person name="Ramsey Y."/>
            <person name="Rand V."/>
            <person name="Scharfe M."/>
            <person name="Sehra H.K."/>
            <person name="Shownkeen R."/>
            <person name="Sims S.K."/>
            <person name="Skuce C.D."/>
            <person name="Smith M."/>
            <person name="Steward C.A."/>
            <person name="Swarbreck D."/>
            <person name="Sycamore N."/>
            <person name="Tester J."/>
            <person name="Thorpe A."/>
            <person name="Tracey A."/>
            <person name="Tromans A."/>
            <person name="Thomas D.W."/>
            <person name="Wall M."/>
            <person name="Wallis J.M."/>
            <person name="West A.P."/>
            <person name="Whitehead S.L."/>
            <person name="Willey D.L."/>
            <person name="Williams S.A."/>
            <person name="Wilming L."/>
            <person name="Wray P.W."/>
            <person name="Young L."/>
            <person name="Ashurst J.L."/>
            <person name="Coulson A."/>
            <person name="Blocker H."/>
            <person name="Durbin R.M."/>
            <person name="Sulston J.E."/>
            <person name="Hubbard T."/>
            <person name="Jackson M.J."/>
            <person name="Bentley D.R."/>
            <person name="Beck S."/>
            <person name="Rogers J."/>
            <person name="Dunham I."/>
        </authorList>
    </citation>
    <scope>NUCLEOTIDE SEQUENCE [LARGE SCALE GENOMIC DNA]</scope>
</reference>
<reference key="3">
    <citation type="journal article" date="2004" name="Genome Res.">
        <title>The status, quality, and expansion of the NIH full-length cDNA project: the Mammalian Gene Collection (MGC).</title>
        <authorList>
            <consortium name="The MGC Project Team"/>
        </authorList>
    </citation>
    <scope>NUCLEOTIDE SEQUENCE [LARGE SCALE MRNA] (ISOFORMS 1; 2 AND 3)</scope>
    <source>
        <tissue>Prostate</tissue>
        <tissue>Skin</tissue>
    </source>
</reference>
<reference key="4">
    <citation type="journal article" date="2004" name="Gene">
        <title>A novel human homologue of Drosophila polycomblike gene is up-regulated in multiple cancers.</title>
        <authorList>
            <person name="Wang S."/>
            <person name="Robertson G.P."/>
            <person name="Zhu J."/>
        </authorList>
    </citation>
    <scope>FUNCTION</scope>
    <scope>SUBCELLULAR LOCATION</scope>
    <scope>TISSUE SPECIFICITY</scope>
</reference>
<reference key="5">
    <citation type="journal article" date="2008" name="Mol. Cell">
        <title>Kinase-selective enrichment enables quantitative phosphoproteomics of the kinome across the cell cycle.</title>
        <authorList>
            <person name="Daub H."/>
            <person name="Olsen J.V."/>
            <person name="Bairlein M."/>
            <person name="Gnad F."/>
            <person name="Oppermann F.S."/>
            <person name="Korner R."/>
            <person name="Greff Z."/>
            <person name="Keri G."/>
            <person name="Stemmann O."/>
            <person name="Mann M."/>
        </authorList>
    </citation>
    <scope>PHOSPHORYLATION [LARGE SCALE ANALYSIS] AT SER-166 (ISOFORM 2)</scope>
    <scope>IDENTIFICATION BY MASS SPECTROMETRY [LARGE SCALE ANALYSIS]</scope>
    <source>
        <tissue>Cervix carcinoma</tissue>
    </source>
</reference>
<reference key="6">
    <citation type="journal article" date="2011" name="Biochem. J.">
        <title>Functional characterization of human Polycomb-like 3 isoforms identifies them as components of distinct EZH2 protein complexes.</title>
        <authorList>
            <person name="Boulay G."/>
            <person name="Rosnoblet C."/>
            <person name="Guerardel C."/>
            <person name="Angrand P.O."/>
            <person name="Leprince D."/>
        </authorList>
    </citation>
    <scope>FUNCTION</scope>
    <scope>ALTERNATIVE SPLICING</scope>
    <scope>INTERACTION WITH EZH2</scope>
</reference>
<reference key="7">
    <citation type="journal article" date="2012" name="Cell Cycle">
        <title>PHF19 and Akt control the switch between proliferative and invasive states in melanoma.</title>
        <authorList>
            <person name="Ghislin S."/>
            <person name="Deshayes F."/>
            <person name="Middendorp S."/>
            <person name="Boggetto N."/>
            <person name="Alcaide-Loridan C."/>
        </authorList>
    </citation>
    <scope>DOWN-REGULATION IN SPHEROID MELANOMA CELLS</scope>
</reference>
<reference key="8">
    <citation type="journal article" date="2012" name="Nat. Struct. Mol. Biol.">
        <title>Polycomb PHF19 binds H3K36me3 and recruits PRC2 and demethylase NO66 to embryonic stem cell genes during differentiation.</title>
        <authorList>
            <person name="Brien G.L."/>
            <person name="Gambero G."/>
            <person name="O'Connell D.J."/>
            <person name="Jerman E."/>
            <person name="Turner S.A."/>
            <person name="Egan C.M."/>
            <person name="Dunne E.J."/>
            <person name="Jurgens M.C."/>
            <person name="Wynne K."/>
            <person name="Piao L."/>
            <person name="Lohan A.J."/>
            <person name="Ferguson N."/>
            <person name="Shi X."/>
            <person name="Sinha K.M."/>
            <person name="Loftus B.J."/>
            <person name="Cagney G."/>
            <person name="Bracken A.P."/>
        </authorList>
    </citation>
    <scope>FUNCTION</scope>
    <scope>H3K36ME3-BINDING</scope>
    <scope>DOMAIN</scope>
    <scope>INTERACTION WITH RIOX1</scope>
    <scope>MUTAGENESIS OF TRP-50 AND TYR-56</scope>
</reference>
<reference key="9">
    <citation type="journal article" date="2013" name="Biochem. Biophys. Res. Commun.">
        <title>Tudor domains of the PRC2 components PHF1 and PHF19 selectively bind to histone H3K36me3.</title>
        <authorList>
            <person name="Qin S."/>
            <person name="Guo Y."/>
            <person name="Xu C."/>
            <person name="Bian C."/>
            <person name="Fu M."/>
            <person name="Gong S."/>
            <person name="Min J."/>
        </authorList>
    </citation>
    <scope>FUNCTION</scope>
    <scope>H3K36ME3-BINDING</scope>
</reference>
<reference key="10">
    <citation type="journal article" date="2013" name="J. Proteome Res.">
        <title>Toward a comprehensive characterization of a human cancer cell phosphoproteome.</title>
        <authorList>
            <person name="Zhou H."/>
            <person name="Di Palma S."/>
            <person name="Preisinger C."/>
            <person name="Peng M."/>
            <person name="Polat A.N."/>
            <person name="Heck A.J."/>
            <person name="Mohammed S."/>
        </authorList>
    </citation>
    <scope>PHOSPHORYLATION [LARGE SCALE ANALYSIS] AT SER-13; SER-187; SER-365 AND SER-366</scope>
    <scope>IDENTIFICATION BY MASS SPECTROMETRY [LARGE SCALE ANALYSIS]</scope>
    <source>
        <tissue>Erythroleukemia</tissue>
    </source>
</reference>
<reference key="11">
    <citation type="journal article" date="2013" name="Mol. Cell">
        <title>An H3K36 methylation-engaging Tudor motif of Polycomb-like proteins mediates PRC2 complex targeting.</title>
        <authorList>
            <person name="Cai L."/>
            <person name="Rothbart S.B."/>
            <person name="Lu R."/>
            <person name="Xu B."/>
            <person name="Chen W.Y."/>
            <person name="Tripathy A."/>
            <person name="Rockowitz S."/>
            <person name="Zheng D."/>
            <person name="Patel D.J."/>
            <person name="Allis C.D."/>
            <person name="Strahl B.D."/>
            <person name="Song J."/>
            <person name="Wang G.G."/>
        </authorList>
    </citation>
    <scope>FUNCTION</scope>
    <scope>H3K36ME3-BINDING</scope>
    <scope>MUTAGENESIS OF TYR-56</scope>
</reference>
<reference evidence="12" key="12">
    <citation type="journal article" date="2018" name="Mol. Cell">
        <title>Unique Structural Platforms of Suz12 Dictate Distinct Classes of PRC2 for Chromatin Binding.</title>
        <authorList>
            <person name="Chen S."/>
            <person name="Jiao L."/>
            <person name="Shubbar M."/>
            <person name="Yang X."/>
            <person name="Liu X."/>
        </authorList>
    </citation>
    <scope>FUNCTION</scope>
    <scope>ASSOCIATION WITH THE PRC2 COMPLEX</scope>
    <scope>INTERACTION WITH SUZ12</scope>
</reference>
<reference key="13">
    <citation type="submission" date="2009-02" db="PDB data bank">
        <title>Solution structure of the tudor domain of PHD finger protein 19, isoform B [Homo sapiens].</title>
        <authorList>
            <consortium name="RIKEN structural genomics initiative (RSGI)"/>
        </authorList>
    </citation>
    <scope>STRUCTURE BY NMR OF 40-95</scope>
</reference>
<reference key="14">
    <citation type="journal article" date="2012" name="Nat. Struct. Mol. Biol.">
        <title>Phf19 links methylated Lys36 of histone H3 to regulation of Polycomb activity.</title>
        <authorList>
            <person name="Ballare C."/>
            <person name="Lange M."/>
            <person name="Lapinaite A."/>
            <person name="Martin G.M."/>
            <person name="Morey L."/>
            <person name="Pascual G."/>
            <person name="Liefke R."/>
            <person name="Simon B."/>
            <person name="Shi Y."/>
            <person name="Gozani O."/>
            <person name="Carlomagno T."/>
            <person name="Benitah S.A."/>
            <person name="Di Croce L."/>
        </authorList>
    </citation>
    <scope>STRUCTURE BY NMR OF 38-95</scope>
    <scope>FUNCTION</scope>
    <scope>ASSOCIATION WITH THE PRC2 COMPLEX</scope>
    <scope>H3K36ME3-BINDING</scope>
    <scope>DOMAIN</scope>
    <scope>INTERACTION WITH SUZ12</scope>
    <scope>MUTAGENESIS OF TRP-50</scope>
</reference>
<reference evidence="14" key="15">
    <citation type="journal article" date="2020" name="Mol. Cell">
        <title>A Dimeric Structural Scaffold for PRC2-PCL Targeting to CpG Island Chromatin.</title>
        <authorList>
            <person name="Chen S."/>
            <person name="Jiao L."/>
            <person name="Liu X."/>
            <person name="Yang X."/>
            <person name="Liu X."/>
        </authorList>
    </citation>
    <scope>X-RAY CRYSTALLOGRAPHY (2.89 ANGSTROMS) OF 500-580 IN COMPLEX WITH SUZ12; RBBP4 AND JARID2</scope>
    <scope>FUNCTION</scope>
    <scope>ASSOCIATION WITH THE PRC2 COMPLEX</scope>
    <scope>SUBCELLULAR LOCATION</scope>
    <scope>MUTAGENESIS OF 331-LYS-LYS-332</scope>
</reference>
<comment type="function">
    <text evidence="2 3 5 6 7 8 9 10">Polycomb group (PcG) protein that specifically binds histone H3 trimethylated at 'Lys-36' (H3K36me3) and recruits the PRC2 complex, thus enhancing PRC2 H3K27me3 methylation activity (PubMed:15563832, PubMed:18691976, PubMed:23104054, PubMed:23160351, PubMed:23228662, PubMed:23273982, PubMed:29499137, PubMed:31959557). Probably involved in the transition from an active state to a repressed state in embryonic stem cells: acts by binding to H3K36me3, a mark for transcriptional activation, and recruiting H3K36me3 histone demethylases RIOX1 or KDM2B, leading to demethylation of H3K36 and recruitment of the PRC2 complex that mediates H3K27me3 methylation, followed by de novo silencing (PubMed:23160351). Recruits the PRC2 complex to CpG islands and contributes to embryonic stem cell self-renewal. Also binds histone H3 dimethylated at 'Lys-36' (H3K36me2) (PubMed:23104054). Isoform 1 and isoform 2 inhibit transcription from an HSV-tk promoter (PubMed:15563832).</text>
</comment>
<comment type="subunit">
    <text evidence="4 5 6 9 10">Associates with the PRC2 complex, which consists of the core components EED, EZH1 or EZH2, SUZ12, and RBBP4, and various combinations of accessory subunits including AEBP2, JARID2, PHF19, MTF2 and EPOP (PubMed:23104054, PubMed:29499137, PubMed:31959557). Forms a dimeric PRC2.1 (class 1, PRC-PCL) complex consisting of at least SUZ12, RBBP4, and PHF19 or MTF2; PHF19 and MTF2 stabilize the dimeric structure which enhances PRC2 interaction with chromatin (PubMed:31959557). Interacts with SUZ12; competes with AEBP2 for SUZ12 binding (PubMed:29499137, PubMed:31959557). Interacts with EZH2 (via its Tudor domain) (PubMed:21143197). Isoform 1 interacts with SUZ12; isoform 2 does not interact with SUZ12 (PubMed:23104054). Interacts with RIOX1 (PubMed:23160351).</text>
</comment>
<comment type="interaction">
    <interactant intactId="EBI-2339674">
        <id>Q5T6S3</id>
    </interactant>
    <interactant intactId="EBI-702390">
        <id>Q9UBB4</id>
        <label>ATXN10</label>
    </interactant>
    <organismsDiffer>false</organismsDiffer>
    <experiments>3</experiments>
</comment>
<comment type="interaction">
    <interactant intactId="EBI-2339674">
        <id>Q5T6S3</id>
    </interactant>
    <interactant intactId="EBI-2949658">
        <id>O95429</id>
        <label>BAG4</label>
    </interactant>
    <organismsDiffer>false</organismsDiffer>
    <experiments>3</experiments>
</comment>
<comment type="interaction">
    <interactant intactId="EBI-2339674">
        <id>Q5T6S3</id>
    </interactant>
    <interactant intactId="EBI-2837444">
        <id>Q8WUW1</id>
        <label>BRK1</label>
    </interactant>
    <organismsDiffer>false</organismsDiffer>
    <experiments>3</experiments>
</comment>
<comment type="interaction">
    <interactant intactId="EBI-2339674">
        <id>Q5T6S3</id>
    </interactant>
    <interactant intactId="EBI-347804">
        <id>P68400</id>
        <label>CSNK2A1</label>
    </interactant>
    <organismsDiffer>false</organismsDiffer>
    <experiments>3</experiments>
</comment>
<comment type="interaction">
    <interactant intactId="EBI-2339674">
        <id>Q5T6S3</id>
    </interactant>
    <interactant intactId="EBI-750300">
        <id>Q01658</id>
        <label>DR1</label>
    </interactant>
    <organismsDiffer>false</organismsDiffer>
    <experiments>3</experiments>
</comment>
<comment type="interaction">
    <interactant intactId="EBI-2339674">
        <id>Q5T6S3</id>
    </interactant>
    <interactant intactId="EBI-739789">
        <id>Q92997</id>
        <label>DVL3</label>
    </interactant>
    <organismsDiffer>false</organismsDiffer>
    <experiments>3</experiments>
</comment>
<comment type="interaction">
    <interactant intactId="EBI-2339674">
        <id>Q5T6S3</id>
    </interactant>
    <interactant intactId="EBI-5280572">
        <id>P29692-2</id>
        <label>EEF1D</label>
    </interactant>
    <organismsDiffer>false</organismsDiffer>
    <experiments>3</experiments>
</comment>
<comment type="interaction">
    <interactant intactId="EBI-2339674">
        <id>Q5T6S3</id>
    </interactant>
    <interactant intactId="EBI-744302">
        <id>P14136</id>
        <label>GFAP</label>
    </interactant>
    <organismsDiffer>false</organismsDiffer>
    <experiments>3</experiments>
</comment>
<comment type="interaction">
    <interactant intactId="EBI-2339674">
        <id>Q5T6S3</id>
    </interactant>
    <interactant intactId="EBI-389564">
        <id>Q00403</id>
        <label>GTF2B</label>
    </interactant>
    <organismsDiffer>false</organismsDiffer>
    <experiments>3</experiments>
</comment>
<comment type="interaction">
    <interactant intactId="EBI-2339674">
        <id>Q5T6S3</id>
    </interactant>
    <interactant intactId="EBI-3893317">
        <id>P09067</id>
        <label>HOXB5</label>
    </interactant>
    <organismsDiffer>false</organismsDiffer>
    <experiments>3</experiments>
</comment>
<comment type="interaction">
    <interactant intactId="EBI-2339674">
        <id>Q5T6S3</id>
    </interactant>
    <interactant intactId="EBI-769401">
        <id>Q8NBZ0</id>
        <label>INO80E</label>
    </interactant>
    <organismsDiffer>false</organismsDiffer>
    <experiments>3</experiments>
</comment>
<comment type="interaction">
    <interactant intactId="EBI-2339674">
        <id>Q5T6S3</id>
    </interactant>
    <interactant intactId="EBI-710124">
        <id>O60341</id>
        <label>KDM1A</label>
    </interactant>
    <organismsDiffer>false</organismsDiffer>
    <experiments>2</experiments>
</comment>
<comment type="interaction">
    <interactant intactId="EBI-2339674">
        <id>Q5T6S3</id>
    </interactant>
    <interactant intactId="EBI-741037">
        <id>Q9BRK4</id>
        <label>LZTS2</label>
    </interactant>
    <organismsDiffer>false</organismsDiffer>
    <experiments>3</experiments>
</comment>
<comment type="interaction">
    <interactant intactId="EBI-2339674">
        <id>Q5T6S3</id>
    </interactant>
    <interactant intactId="EBI-713665">
        <id>P19404</id>
        <label>NDUFV2</label>
    </interactant>
    <organismsDiffer>false</organismsDiffer>
    <experiments>3</experiments>
</comment>
<comment type="interaction">
    <interactant intactId="EBI-2339674">
        <id>Q5T6S3</id>
    </interactant>
    <interactant intactId="EBI-79165">
        <id>Q9NRD5</id>
        <label>PICK1</label>
    </interactant>
    <organismsDiffer>false</organismsDiffer>
    <experiments>3</experiments>
</comment>
<comment type="interaction">
    <interactant intactId="EBI-2339674">
        <id>Q5T6S3</id>
    </interactant>
    <interactant intactId="EBI-50433196">
        <id>A0A6Q8PF08</id>
        <label>PMP22</label>
    </interactant>
    <organismsDiffer>false</organismsDiffer>
    <experiments>3</experiments>
</comment>
<comment type="interaction">
    <interactant intactId="EBI-2339674">
        <id>Q5T6S3</id>
    </interactant>
    <interactant intactId="EBI-18165900">
        <id>A0JP26</id>
        <label>POTEB3</label>
    </interactant>
    <organismsDiffer>false</organismsDiffer>
    <experiments>3</experiments>
</comment>
<comment type="interaction">
    <interactant intactId="EBI-2339674">
        <id>Q5T6S3</id>
    </interactant>
    <interactant intactId="EBI-1504830">
        <id>Q9P2K3-2</id>
        <label>RCOR3</label>
    </interactant>
    <organismsDiffer>false</organismsDiffer>
    <experiments>3</experiments>
</comment>
<comment type="interaction">
    <interactant intactId="EBI-2339674">
        <id>Q5T6S3</id>
    </interactant>
    <interactant intactId="EBI-749336">
        <id>Q8TAD8</id>
        <label>SNIP1</label>
    </interactant>
    <organismsDiffer>false</organismsDiffer>
    <experiments>3</experiments>
</comment>
<comment type="interaction">
    <interactant intactId="EBI-2339674">
        <id>Q5T6S3</id>
    </interactant>
    <interactant intactId="EBI-349968">
        <id>O43463</id>
        <label>SUV39H1</label>
    </interactant>
    <organismsDiffer>false</organismsDiffer>
    <experiments>2</experiments>
</comment>
<comment type="interaction">
    <interactant intactId="EBI-2339674">
        <id>Q5T6S3</id>
    </interactant>
    <interactant intactId="EBI-723127">
        <id>Q9H5I1</id>
        <label>SUV39H2</label>
    </interactant>
    <organismsDiffer>false</organismsDiffer>
    <experiments>2</experiments>
</comment>
<comment type="interaction">
    <interactant intactId="EBI-2339674">
        <id>Q5T6S3</id>
    </interactant>
    <interactant intactId="EBI-741515">
        <id>Q9NVV9</id>
        <label>THAP1</label>
    </interactant>
    <organismsDiffer>false</organismsDiffer>
    <experiments>3</experiments>
</comment>
<comment type="interaction">
    <interactant intactId="EBI-2339674">
        <id>Q5T6S3</id>
    </interactant>
    <interactant intactId="EBI-741350">
        <id>Q9BT49</id>
        <label>THAP7</label>
    </interactant>
    <organismsDiffer>false</organismsDiffer>
    <experiments>3</experiments>
</comment>
<comment type="interaction">
    <interactant intactId="EBI-2339674">
        <id>Q5T6S3</id>
    </interactant>
    <interactant intactId="EBI-947459">
        <id>Q9H2G4</id>
        <label>TSPYL2</label>
    </interactant>
    <organismsDiffer>false</organismsDiffer>
    <experiments>3</experiments>
</comment>
<comment type="interaction">
    <interactant intactId="EBI-2339674">
        <id>Q5T6S3</id>
    </interactant>
    <interactant intactId="EBI-2849854">
        <id>Q96MU7</id>
        <label>YTHDC1</label>
    </interactant>
    <organismsDiffer>false</organismsDiffer>
    <experiments>3</experiments>
</comment>
<comment type="interaction">
    <interactant intactId="EBI-2339674">
        <id>Q5T6S3</id>
    </interactant>
    <interactant intactId="EBI-11962574">
        <id>Q96EG3</id>
        <label>ZNF837</label>
    </interactant>
    <organismsDiffer>false</organismsDiffer>
    <experiments>3</experiments>
</comment>
<comment type="interaction">
    <interactant intactId="EBI-2339674">
        <id>Q5T6S3</id>
    </interactant>
    <interactant intactId="EBI-527853">
        <id>Q9UGI0</id>
        <label>ZRANB1</label>
    </interactant>
    <organismsDiffer>false</organismsDiffer>
    <experiments>3</experiments>
</comment>
<comment type="subcellular location">
    <subcellularLocation>
        <location evidence="2 10">Nucleus</location>
    </subcellularLocation>
    <text evidence="10">Localizes to chromatin as part of the PRC2 complex.</text>
</comment>
<comment type="alternative products">
    <event type="alternative splicing"/>
    <isoform>
        <id>Q5T6S3-1</id>
        <name>1</name>
        <name>PCL3L</name>
        <name>hPCL3L</name>
        <sequence type="displayed"/>
    </isoform>
    <isoform>
        <id>Q5T6S3-2</id>
        <name>2</name>
        <name>PCL3S</name>
        <name>hPCL3S</name>
        <sequence type="described" ref="VSP_031224 VSP_031225"/>
    </isoform>
    <isoform>
        <id>Q5T6S3-3</id>
        <name>3</name>
        <sequence type="described" ref="VSP_031222 VSP_031223"/>
    </isoform>
</comment>
<comment type="tissue specificity">
    <text evidence="2">Isoform 1 is expressed in thymus, heart, lung and kidney. Isoform 2 is predominantly expressed in placenta, skeletal muscle and kidney, whereas isoform 1 is predominantly expressed in liver and peripheral blood leukocytes. Overexpressed in many types of cancers, including colon, skin, lung, rectal, cervical, uterus, liver cancers, in cell lines derived from different stages of melanoma and in glioma cell lines.</text>
</comment>
<comment type="domain">
    <text evidence="5 6">The Tudor domain recognizes and binds H3K36me3 (PubMed:23104054, PubMed:23160351, PubMed:23228662, PubMed:23273982). May also bind H3K27me3, with a lower affinity (PubMed:23160351).</text>
</comment>
<comment type="miscellaneous">
    <text evidence="13">Down-regulated in spheroid melanoma cells that display an invasive phenotype, characterized by a higher motility, a poor proliferation rate and a gain of pluripotency gene expression. PHF19 favors the proliferation and reduces the transmigration capacity of melanoma cell lines, 2 properties of invasive cells, suggesting that down-regulation may participate in the switch from proliferative to invasive states in melanoma cells (PubMed:22487681).</text>
</comment>
<comment type="similarity">
    <text evidence="12">Belongs to the Polycomblike family.</text>
</comment>
<comment type="sequence caution" evidence="12">
    <conflict type="erroneous initiation">
        <sequence resource="EMBL-CDS" id="CAE45832"/>
    </conflict>
    <text>Extended N-terminus.</text>
</comment>
<gene>
    <name type="primary">PHF19</name>
    <name type="synonym">PCL3</name>
</gene>
<dbReference type="EMBL" id="AL117477">
    <property type="protein sequence ID" value="CAB55950.1"/>
    <property type="molecule type" value="mRNA"/>
</dbReference>
<dbReference type="EMBL" id="BX640713">
    <property type="protein sequence ID" value="CAE45832.1"/>
    <property type="status" value="ALT_INIT"/>
    <property type="molecule type" value="mRNA"/>
</dbReference>
<dbReference type="EMBL" id="AL161911">
    <property type="status" value="NOT_ANNOTATED_CDS"/>
    <property type="molecule type" value="Genomic_DNA"/>
</dbReference>
<dbReference type="EMBL" id="AL354792">
    <property type="status" value="NOT_ANNOTATED_CDS"/>
    <property type="molecule type" value="Genomic_DNA"/>
</dbReference>
<dbReference type="EMBL" id="BC022374">
    <property type="protein sequence ID" value="AAH22374.1"/>
    <property type="molecule type" value="mRNA"/>
</dbReference>
<dbReference type="EMBL" id="BC108663">
    <property type="protein sequence ID" value="AAI08664.1"/>
    <property type="molecule type" value="mRNA"/>
</dbReference>
<dbReference type="EMBL" id="BC125076">
    <property type="protein sequence ID" value="AAI25077.1"/>
    <property type="molecule type" value="mRNA"/>
</dbReference>
<dbReference type="EMBL" id="BC125077">
    <property type="protein sequence ID" value="AAI25078.1"/>
    <property type="molecule type" value="mRNA"/>
</dbReference>
<dbReference type="CCDS" id="CCDS35116.1">
    <molecule id="Q5T6S3-1"/>
</dbReference>
<dbReference type="CCDS" id="CCDS35117.1">
    <molecule id="Q5T6S3-2"/>
</dbReference>
<dbReference type="PIR" id="T17260">
    <property type="entry name" value="T17260"/>
</dbReference>
<dbReference type="RefSeq" id="NP_001009936.1">
    <molecule id="Q5T6S3-2"/>
    <property type="nucleotide sequence ID" value="NM_001009936.3"/>
</dbReference>
<dbReference type="RefSeq" id="NP_001273769.1">
    <property type="nucleotide sequence ID" value="NM_001286840.1"/>
</dbReference>
<dbReference type="RefSeq" id="NP_001273772.1">
    <molecule id="Q5T6S3-3"/>
    <property type="nucleotide sequence ID" value="NM_001286843.2"/>
</dbReference>
<dbReference type="RefSeq" id="NP_056466.1">
    <molecule id="Q5T6S3-1"/>
    <property type="nucleotide sequence ID" value="NM_015651.3"/>
</dbReference>
<dbReference type="RefSeq" id="XP_005251963.1">
    <property type="nucleotide sequence ID" value="XM_005251906.2"/>
</dbReference>
<dbReference type="RefSeq" id="XP_011516811.1">
    <molecule id="Q5T6S3-1"/>
    <property type="nucleotide sequence ID" value="XM_011518509.4"/>
</dbReference>
<dbReference type="RefSeq" id="XP_016870101.1">
    <molecule id="Q5T6S3-1"/>
    <property type="nucleotide sequence ID" value="XM_017014612.3"/>
</dbReference>
<dbReference type="RefSeq" id="XP_054218672.1">
    <molecule id="Q5T6S3-1"/>
    <property type="nucleotide sequence ID" value="XM_054362697.1"/>
</dbReference>
<dbReference type="RefSeq" id="XP_054218673.1">
    <molecule id="Q5T6S3-1"/>
    <property type="nucleotide sequence ID" value="XM_054362698.1"/>
</dbReference>
<dbReference type="PDB" id="2E5Q">
    <property type="method" value="NMR"/>
    <property type="chains" value="A=40-95"/>
</dbReference>
<dbReference type="PDB" id="4BD3">
    <property type="method" value="NMR"/>
    <property type="chains" value="A=38-95"/>
</dbReference>
<dbReference type="PDB" id="6NQ3">
    <property type="method" value="X-ray"/>
    <property type="resolution" value="2.89 A"/>
    <property type="chains" value="C/G=500-580"/>
</dbReference>
<dbReference type="PDB" id="6WAU">
    <property type="method" value="X-ray"/>
    <property type="resolution" value="1.75 A"/>
    <property type="chains" value="A/B/C/D/E/F=38-96"/>
</dbReference>
<dbReference type="PDBsum" id="2E5Q"/>
<dbReference type="PDBsum" id="4BD3"/>
<dbReference type="PDBsum" id="6NQ3"/>
<dbReference type="PDBsum" id="6WAU"/>
<dbReference type="BMRB" id="Q5T6S3"/>
<dbReference type="SMR" id="Q5T6S3"/>
<dbReference type="BioGRID" id="117578">
    <property type="interactions" value="83"/>
</dbReference>
<dbReference type="ComplexPortal" id="CPX-2196">
    <property type="entry name" value="Polycomb repressive complex 2.1, EZH1-RBBP4-PCL3-PALI1 variant"/>
</dbReference>
<dbReference type="ComplexPortal" id="CPX-2198">
    <property type="entry name" value="Polycomb repressive complex 2.1,EZH2-RBBP4-PCL3-PALI1 variant"/>
</dbReference>
<dbReference type="ComplexPortal" id="CPX-2316">
    <property type="entry name" value="Polycomb repressive complex 2.1,EZH2-RBBP7-PCL3-PALI1 variant"/>
</dbReference>
<dbReference type="ComplexPortal" id="CPX-2322">
    <property type="entry name" value="Polycomb repressive complex 2.1, EZH1-RBBP4-PCL3-EPOP variant"/>
</dbReference>
<dbReference type="ComplexPortal" id="CPX-2323">
    <property type="entry name" value="Polycomb repressive complex 2.1, EZH1-RBBP7-PCL3-EPOP variant"/>
</dbReference>
<dbReference type="ComplexPortal" id="CPX-2328">
    <property type="entry name" value="Polycomb repressive complex 2.1, EZH2-RBBP4-PCL3-EPOP variant"/>
</dbReference>
<dbReference type="ComplexPortal" id="CPX-2329">
    <property type="entry name" value="Polycomb repressive complex 2.1, EZH2-RBBP7-PCL3-EPOP variant"/>
</dbReference>
<dbReference type="ComplexPortal" id="CPX-2570">
    <property type="entry name" value="Polycomb repressive complex 2.1, EZH1-RBBP7-PCL3-PALI1 variant"/>
</dbReference>
<dbReference type="CORUM" id="Q5T6S3"/>
<dbReference type="FunCoup" id="Q5T6S3">
    <property type="interactions" value="2151"/>
</dbReference>
<dbReference type="IntAct" id="Q5T6S3">
    <property type="interactions" value="58"/>
</dbReference>
<dbReference type="MINT" id="Q5T6S3"/>
<dbReference type="STRING" id="9606.ENSP00000483946"/>
<dbReference type="BindingDB" id="Q5T6S3"/>
<dbReference type="ChEMBL" id="CHEMBL5465318"/>
<dbReference type="GlyGen" id="Q5T6S3">
    <property type="glycosylation" value="2 sites, 1 O-linked glycan (1 site)"/>
</dbReference>
<dbReference type="iPTMnet" id="Q5T6S3"/>
<dbReference type="PhosphoSitePlus" id="Q5T6S3"/>
<dbReference type="BioMuta" id="PHF19"/>
<dbReference type="DMDM" id="74745265"/>
<dbReference type="jPOST" id="Q5T6S3"/>
<dbReference type="MassIVE" id="Q5T6S3"/>
<dbReference type="PaxDb" id="9606-ENSP00000483946"/>
<dbReference type="PeptideAtlas" id="Q5T6S3"/>
<dbReference type="ProteomicsDB" id="64610">
    <molecule id="Q5T6S3-1"/>
</dbReference>
<dbReference type="ProteomicsDB" id="64611">
    <molecule id="Q5T6S3-2"/>
</dbReference>
<dbReference type="ProteomicsDB" id="64612">
    <molecule id="Q5T6S3-3"/>
</dbReference>
<dbReference type="Pumba" id="Q5T6S3"/>
<dbReference type="Antibodypedia" id="30114">
    <property type="antibodies" value="155 antibodies from 27 providers"/>
</dbReference>
<dbReference type="DNASU" id="26147"/>
<dbReference type="Ensembl" id="ENST00000312189.10">
    <molecule id="Q5T6S3-2"/>
    <property type="protein sequence ID" value="ENSP00000310372.6"/>
    <property type="gene ID" value="ENSG00000119403.15"/>
</dbReference>
<dbReference type="Ensembl" id="ENST00000373896.8">
    <molecule id="Q5T6S3-1"/>
    <property type="protein sequence ID" value="ENSP00000363003.3"/>
    <property type="gene ID" value="ENSG00000119403.15"/>
</dbReference>
<dbReference type="GeneID" id="26147"/>
<dbReference type="KEGG" id="hsa:26147"/>
<dbReference type="MANE-Select" id="ENST00000373896.8">
    <property type="protein sequence ID" value="ENSP00000363003.3"/>
    <property type="RefSeq nucleotide sequence ID" value="NM_015651.3"/>
    <property type="RefSeq protein sequence ID" value="NP_056466.1"/>
</dbReference>
<dbReference type="UCSC" id="uc004bks.3">
    <molecule id="Q5T6S3-1"/>
    <property type="organism name" value="human"/>
</dbReference>
<dbReference type="AGR" id="HGNC:24566"/>
<dbReference type="CTD" id="26147"/>
<dbReference type="DisGeNET" id="26147"/>
<dbReference type="GeneCards" id="PHF19"/>
<dbReference type="HGNC" id="HGNC:24566">
    <property type="gene designation" value="PHF19"/>
</dbReference>
<dbReference type="HPA" id="ENSG00000119403">
    <property type="expression patterns" value="Low tissue specificity"/>
</dbReference>
<dbReference type="MIM" id="609740">
    <property type="type" value="gene"/>
</dbReference>
<dbReference type="neXtProt" id="NX_Q5T6S3"/>
<dbReference type="OpenTargets" id="ENSG00000119403"/>
<dbReference type="PharmGKB" id="PA134911501"/>
<dbReference type="VEuPathDB" id="HostDB:ENSG00000119403"/>
<dbReference type="eggNOG" id="KOG4323">
    <property type="taxonomic scope" value="Eukaryota"/>
</dbReference>
<dbReference type="GeneTree" id="ENSGT00950000183180"/>
<dbReference type="HOGENOM" id="CLU_032773_1_0_1"/>
<dbReference type="InParanoid" id="Q5T6S3"/>
<dbReference type="OrthoDB" id="10033786at2759"/>
<dbReference type="PAN-GO" id="Q5T6S3">
    <property type="GO annotations" value="6 GO annotations based on evolutionary models"/>
</dbReference>
<dbReference type="PhylomeDB" id="Q5T6S3"/>
<dbReference type="TreeFam" id="TF106420"/>
<dbReference type="PathwayCommons" id="Q5T6S3"/>
<dbReference type="Reactome" id="R-HSA-212300">
    <property type="pathway name" value="PRC2 methylates histones and DNA"/>
</dbReference>
<dbReference type="SignaLink" id="Q5T6S3"/>
<dbReference type="BioGRID-ORCS" id="26147">
    <property type="hits" value="12 hits in 1155 CRISPR screens"/>
</dbReference>
<dbReference type="ChiTaRS" id="PHF19">
    <property type="organism name" value="human"/>
</dbReference>
<dbReference type="EvolutionaryTrace" id="Q5T6S3"/>
<dbReference type="GenomeRNAi" id="26147"/>
<dbReference type="Pharos" id="Q5T6S3">
    <property type="development level" value="Tbio"/>
</dbReference>
<dbReference type="PRO" id="PR:Q5T6S3"/>
<dbReference type="Proteomes" id="UP000005640">
    <property type="component" value="Chromosome 9"/>
</dbReference>
<dbReference type="RNAct" id="Q5T6S3">
    <property type="molecule type" value="protein"/>
</dbReference>
<dbReference type="Bgee" id="ENSG00000119403">
    <property type="expression patterns" value="Expressed in ventricular zone and 171 other cell types or tissues"/>
</dbReference>
<dbReference type="ExpressionAtlas" id="Q5T6S3">
    <property type="expression patterns" value="baseline and differential"/>
</dbReference>
<dbReference type="GO" id="GO:0035098">
    <property type="term" value="C:ESC/E(Z) complex"/>
    <property type="evidence" value="ECO:0000314"/>
    <property type="project" value="UniProtKB"/>
</dbReference>
<dbReference type="GO" id="GO:0005654">
    <property type="term" value="C:nucleoplasm"/>
    <property type="evidence" value="ECO:0000304"/>
    <property type="project" value="Reactome"/>
</dbReference>
<dbReference type="GO" id="GO:0005634">
    <property type="term" value="C:nucleus"/>
    <property type="evidence" value="ECO:0000318"/>
    <property type="project" value="GO_Central"/>
</dbReference>
<dbReference type="GO" id="GO:0003682">
    <property type="term" value="F:chromatin binding"/>
    <property type="evidence" value="ECO:0000318"/>
    <property type="project" value="GO_Central"/>
</dbReference>
<dbReference type="GO" id="GO:0003677">
    <property type="term" value="F:DNA binding"/>
    <property type="evidence" value="ECO:0000318"/>
    <property type="project" value="GO_Central"/>
</dbReference>
<dbReference type="GO" id="GO:0140003">
    <property type="term" value="F:histone H3K36me3 reader activity"/>
    <property type="evidence" value="ECO:0000314"/>
    <property type="project" value="UniProtKB"/>
</dbReference>
<dbReference type="GO" id="GO:0140002">
    <property type="term" value="F:histone H3K4me3 reader activity"/>
    <property type="evidence" value="ECO:0007669"/>
    <property type="project" value="Ensembl"/>
</dbReference>
<dbReference type="GO" id="GO:0035064">
    <property type="term" value="F:methylated histone binding"/>
    <property type="evidence" value="ECO:0000318"/>
    <property type="project" value="GO_Central"/>
</dbReference>
<dbReference type="GO" id="GO:0008270">
    <property type="term" value="F:zinc ion binding"/>
    <property type="evidence" value="ECO:0007669"/>
    <property type="project" value="UniProtKB-KW"/>
</dbReference>
<dbReference type="GO" id="GO:0045814">
    <property type="term" value="P:negative regulation of gene expression, epigenetic"/>
    <property type="evidence" value="ECO:0000315"/>
    <property type="project" value="UniProtKB"/>
</dbReference>
<dbReference type="GO" id="GO:0000122">
    <property type="term" value="P:negative regulation of transcription by RNA polymerase II"/>
    <property type="evidence" value="ECO:0007669"/>
    <property type="project" value="Ensembl"/>
</dbReference>
<dbReference type="GO" id="GO:0048863">
    <property type="term" value="P:stem cell differentiation"/>
    <property type="evidence" value="ECO:0007669"/>
    <property type="project" value="Ensembl"/>
</dbReference>
<dbReference type="GO" id="GO:0019827">
    <property type="term" value="P:stem cell population maintenance"/>
    <property type="evidence" value="ECO:0007669"/>
    <property type="project" value="Ensembl"/>
</dbReference>
<dbReference type="CDD" id="cd15579">
    <property type="entry name" value="PHD1_PHF19"/>
    <property type="match status" value="1"/>
</dbReference>
<dbReference type="CDD" id="cd15581">
    <property type="entry name" value="PHD2_PHF19"/>
    <property type="match status" value="1"/>
</dbReference>
<dbReference type="CDD" id="cd20451">
    <property type="entry name" value="Tudor_PHF19"/>
    <property type="match status" value="1"/>
</dbReference>
<dbReference type="FunFam" id="2.30.30.140:FF:000014">
    <property type="entry name" value="Metal-response element-binding transcription factor 2"/>
    <property type="match status" value="1"/>
</dbReference>
<dbReference type="FunFam" id="3.90.980.20:FF:000001">
    <property type="entry name" value="metal-response element-binding transcription factor 2 isoform X1"/>
    <property type="match status" value="1"/>
</dbReference>
<dbReference type="FunFam" id="3.30.40.10:FF:000198">
    <property type="entry name" value="PHD finger protein 19"/>
    <property type="match status" value="1"/>
</dbReference>
<dbReference type="Gene3D" id="2.30.30.140">
    <property type="match status" value="1"/>
</dbReference>
<dbReference type="Gene3D" id="3.90.980.20">
    <property type="match status" value="1"/>
</dbReference>
<dbReference type="Gene3D" id="3.30.40.10">
    <property type="entry name" value="Zinc/RING finger domain, C3HC4 (zinc finger)"/>
    <property type="match status" value="1"/>
</dbReference>
<dbReference type="IDEAL" id="IID00480"/>
<dbReference type="InterPro" id="IPR040477">
    <property type="entry name" value="KDM4-like_Tudor"/>
</dbReference>
<dbReference type="InterPro" id="IPR025894">
    <property type="entry name" value="Mtf2_C_dom"/>
</dbReference>
<dbReference type="InterPro" id="IPR042017">
    <property type="entry name" value="PHF19_PHD2"/>
</dbReference>
<dbReference type="InterPro" id="IPR002999">
    <property type="entry name" value="Tudor"/>
</dbReference>
<dbReference type="InterPro" id="IPR047400">
    <property type="entry name" value="Tudor_PHF19"/>
</dbReference>
<dbReference type="InterPro" id="IPR019786">
    <property type="entry name" value="Zinc_finger_PHD-type_CS"/>
</dbReference>
<dbReference type="InterPro" id="IPR011011">
    <property type="entry name" value="Znf_FYVE_PHD"/>
</dbReference>
<dbReference type="InterPro" id="IPR001965">
    <property type="entry name" value="Znf_PHD"/>
</dbReference>
<dbReference type="InterPro" id="IPR019787">
    <property type="entry name" value="Znf_PHD-finger"/>
</dbReference>
<dbReference type="InterPro" id="IPR013083">
    <property type="entry name" value="Znf_RING/FYVE/PHD"/>
</dbReference>
<dbReference type="PANTHER" id="PTHR12628:SF6">
    <property type="entry name" value="PHD FINGER PROTEIN 19"/>
    <property type="match status" value="1"/>
</dbReference>
<dbReference type="PANTHER" id="PTHR12628">
    <property type="entry name" value="POLYCOMB-LIKE TRANSCRIPTION FACTOR"/>
    <property type="match status" value="1"/>
</dbReference>
<dbReference type="Pfam" id="PF14061">
    <property type="entry name" value="Mtf2_C"/>
    <property type="match status" value="1"/>
</dbReference>
<dbReference type="Pfam" id="PF00628">
    <property type="entry name" value="PHD"/>
    <property type="match status" value="1"/>
</dbReference>
<dbReference type="Pfam" id="PF18104">
    <property type="entry name" value="Tudor_2"/>
    <property type="match status" value="1"/>
</dbReference>
<dbReference type="SMART" id="SM00249">
    <property type="entry name" value="PHD"/>
    <property type="match status" value="2"/>
</dbReference>
<dbReference type="SMART" id="SM00333">
    <property type="entry name" value="TUDOR"/>
    <property type="match status" value="1"/>
</dbReference>
<dbReference type="SUPFAM" id="SSF57903">
    <property type="entry name" value="FYVE/PHD zinc finger"/>
    <property type="match status" value="2"/>
</dbReference>
<dbReference type="SUPFAM" id="SSF63748">
    <property type="entry name" value="Tudor/PWWP/MBT"/>
    <property type="match status" value="1"/>
</dbReference>
<dbReference type="PROSITE" id="PS01359">
    <property type="entry name" value="ZF_PHD_1"/>
    <property type="match status" value="2"/>
</dbReference>
<evidence type="ECO:0000256" key="1">
    <source>
        <dbReference type="SAM" id="MobiDB-lite"/>
    </source>
</evidence>
<evidence type="ECO:0000269" key="2">
    <source>
    </source>
</evidence>
<evidence type="ECO:0000269" key="3">
    <source>
    </source>
</evidence>
<evidence type="ECO:0000269" key="4">
    <source>
    </source>
</evidence>
<evidence type="ECO:0000269" key="5">
    <source>
    </source>
</evidence>
<evidence type="ECO:0000269" key="6">
    <source>
    </source>
</evidence>
<evidence type="ECO:0000269" key="7">
    <source>
    </source>
</evidence>
<evidence type="ECO:0000269" key="8">
    <source>
    </source>
</evidence>
<evidence type="ECO:0000269" key="9">
    <source>
    </source>
</evidence>
<evidence type="ECO:0000269" key="10">
    <source>
    </source>
</evidence>
<evidence type="ECO:0000303" key="11">
    <source>
    </source>
</evidence>
<evidence type="ECO:0000305" key="12"/>
<evidence type="ECO:0000305" key="13">
    <source>
    </source>
</evidence>
<evidence type="ECO:0007744" key="14">
    <source>
        <dbReference type="PDB" id="6NQ3"/>
    </source>
</evidence>
<evidence type="ECO:0007744" key="15">
    <source>
    </source>
</evidence>
<evidence type="ECO:0007744" key="16">
    <source>
    </source>
</evidence>
<evidence type="ECO:0007829" key="17">
    <source>
        <dbReference type="PDB" id="6NQ3"/>
    </source>
</evidence>
<evidence type="ECO:0007829" key="18">
    <source>
        <dbReference type="PDB" id="6WAU"/>
    </source>
</evidence>